<comment type="function">
    <text evidence="1">Involved in unsaturated fatty acids biosynthesis. Catalyzes the dehydration of short chain beta-hydroxyacyl-ACPs and long chain saturated and unsaturated beta-hydroxyacyl-ACPs.</text>
</comment>
<comment type="catalytic activity">
    <reaction evidence="1">
        <text>a (3R)-hydroxyacyl-[ACP] = a (2E)-enoyl-[ACP] + H2O</text>
        <dbReference type="Rhea" id="RHEA:13097"/>
        <dbReference type="Rhea" id="RHEA-COMP:9925"/>
        <dbReference type="Rhea" id="RHEA-COMP:9945"/>
        <dbReference type="ChEBI" id="CHEBI:15377"/>
        <dbReference type="ChEBI" id="CHEBI:78784"/>
        <dbReference type="ChEBI" id="CHEBI:78827"/>
        <dbReference type="EC" id="4.2.1.59"/>
    </reaction>
</comment>
<comment type="subcellular location">
    <subcellularLocation>
        <location evidence="1">Cytoplasm</location>
    </subcellularLocation>
</comment>
<comment type="similarity">
    <text evidence="1">Belongs to the thioester dehydratase family. FabZ subfamily.</text>
</comment>
<dbReference type="EC" id="4.2.1.59" evidence="1"/>
<dbReference type="EMBL" id="CP000227">
    <property type="protein sequence ID" value="ACM15517.1"/>
    <property type="molecule type" value="Genomic_DNA"/>
</dbReference>
<dbReference type="SMR" id="B9IRQ9"/>
<dbReference type="KEGG" id="bcq:BCQ_5117"/>
<dbReference type="HOGENOM" id="CLU_078912_3_0_9"/>
<dbReference type="Proteomes" id="UP000000441">
    <property type="component" value="Chromosome"/>
</dbReference>
<dbReference type="GO" id="GO:0005737">
    <property type="term" value="C:cytoplasm"/>
    <property type="evidence" value="ECO:0007669"/>
    <property type="project" value="UniProtKB-SubCell"/>
</dbReference>
<dbReference type="GO" id="GO:0016020">
    <property type="term" value="C:membrane"/>
    <property type="evidence" value="ECO:0007669"/>
    <property type="project" value="GOC"/>
</dbReference>
<dbReference type="GO" id="GO:0019171">
    <property type="term" value="F:(3R)-hydroxyacyl-[acyl-carrier-protein] dehydratase activity"/>
    <property type="evidence" value="ECO:0007669"/>
    <property type="project" value="UniProtKB-EC"/>
</dbReference>
<dbReference type="GO" id="GO:0006633">
    <property type="term" value="P:fatty acid biosynthetic process"/>
    <property type="evidence" value="ECO:0007669"/>
    <property type="project" value="UniProtKB-UniRule"/>
</dbReference>
<dbReference type="GO" id="GO:0009245">
    <property type="term" value="P:lipid A biosynthetic process"/>
    <property type="evidence" value="ECO:0007669"/>
    <property type="project" value="UniProtKB-UniRule"/>
</dbReference>
<dbReference type="CDD" id="cd01288">
    <property type="entry name" value="FabZ"/>
    <property type="match status" value="1"/>
</dbReference>
<dbReference type="FunFam" id="3.10.129.10:FF:000001">
    <property type="entry name" value="3-hydroxyacyl-[acyl-carrier-protein] dehydratase FabZ"/>
    <property type="match status" value="1"/>
</dbReference>
<dbReference type="Gene3D" id="3.10.129.10">
    <property type="entry name" value="Hotdog Thioesterase"/>
    <property type="match status" value="1"/>
</dbReference>
<dbReference type="HAMAP" id="MF_00406">
    <property type="entry name" value="FabZ"/>
    <property type="match status" value="1"/>
</dbReference>
<dbReference type="InterPro" id="IPR013114">
    <property type="entry name" value="FabA_FabZ"/>
</dbReference>
<dbReference type="InterPro" id="IPR010084">
    <property type="entry name" value="FabZ"/>
</dbReference>
<dbReference type="InterPro" id="IPR029069">
    <property type="entry name" value="HotDog_dom_sf"/>
</dbReference>
<dbReference type="NCBIfam" id="TIGR01750">
    <property type="entry name" value="fabZ"/>
    <property type="match status" value="1"/>
</dbReference>
<dbReference type="NCBIfam" id="NF000582">
    <property type="entry name" value="PRK00006.1"/>
    <property type="match status" value="1"/>
</dbReference>
<dbReference type="PANTHER" id="PTHR30272">
    <property type="entry name" value="3-HYDROXYACYL-[ACYL-CARRIER-PROTEIN] DEHYDRATASE"/>
    <property type="match status" value="1"/>
</dbReference>
<dbReference type="PANTHER" id="PTHR30272:SF1">
    <property type="entry name" value="3-HYDROXYACYL-[ACYL-CARRIER-PROTEIN] DEHYDRATASE"/>
    <property type="match status" value="1"/>
</dbReference>
<dbReference type="Pfam" id="PF07977">
    <property type="entry name" value="FabA"/>
    <property type="match status" value="1"/>
</dbReference>
<dbReference type="SUPFAM" id="SSF54637">
    <property type="entry name" value="Thioesterase/thiol ester dehydrase-isomerase"/>
    <property type="match status" value="1"/>
</dbReference>
<sequence length="144" mass="15966">MLNIEQIKEIIPHRYPFLLVDKILEVDEGKRAVGIKNVSANEEFFNGHFPDYAVMPGVLIVEALAQVGAVAVLKKEENRGRLAFFAGIDNCRFKKQVRPGDQLRLEVEMTRVRGPIGKGKAIATVDGEVACEAEITFAIGDKKE</sequence>
<gene>
    <name evidence="1" type="primary">fabZ</name>
    <name type="ordered locus">BCQ_5117</name>
</gene>
<proteinExistence type="inferred from homology"/>
<evidence type="ECO:0000255" key="1">
    <source>
        <dbReference type="HAMAP-Rule" id="MF_00406"/>
    </source>
</evidence>
<keyword id="KW-0963">Cytoplasm</keyword>
<keyword id="KW-0441">Lipid A biosynthesis</keyword>
<keyword id="KW-0444">Lipid biosynthesis</keyword>
<keyword id="KW-0443">Lipid metabolism</keyword>
<keyword id="KW-0456">Lyase</keyword>
<protein>
    <recommendedName>
        <fullName evidence="1">3-hydroxyacyl-[acyl-carrier-protein] dehydratase FabZ</fullName>
        <ecNumber evidence="1">4.2.1.59</ecNumber>
    </recommendedName>
    <alternativeName>
        <fullName evidence="1">(3R)-hydroxymyristoyl-[acyl-carrier-protein] dehydratase</fullName>
        <shortName evidence="1">(3R)-hydroxymyristoyl-ACP dehydrase</shortName>
    </alternativeName>
    <alternativeName>
        <fullName evidence="1">Beta-hydroxyacyl-ACP dehydratase</fullName>
    </alternativeName>
</protein>
<organism>
    <name type="scientific">Bacillus cereus (strain Q1)</name>
    <dbReference type="NCBI Taxonomy" id="361100"/>
    <lineage>
        <taxon>Bacteria</taxon>
        <taxon>Bacillati</taxon>
        <taxon>Bacillota</taxon>
        <taxon>Bacilli</taxon>
        <taxon>Bacillales</taxon>
        <taxon>Bacillaceae</taxon>
        <taxon>Bacillus</taxon>
        <taxon>Bacillus cereus group</taxon>
    </lineage>
</organism>
<reference key="1">
    <citation type="journal article" date="2009" name="J. Bacteriol.">
        <title>Complete genome sequence of the extremophilic Bacillus cereus strain Q1 with industrial applications.</title>
        <authorList>
            <person name="Xiong Z."/>
            <person name="Jiang Y."/>
            <person name="Qi D."/>
            <person name="Lu H."/>
            <person name="Yang F."/>
            <person name="Yang J."/>
            <person name="Chen L."/>
            <person name="Sun L."/>
            <person name="Xu X."/>
            <person name="Xue Y."/>
            <person name="Zhu Y."/>
            <person name="Jin Q."/>
        </authorList>
    </citation>
    <scope>NUCLEOTIDE SEQUENCE [LARGE SCALE GENOMIC DNA]</scope>
    <source>
        <strain>Q1</strain>
    </source>
</reference>
<name>FABZ_BACCQ</name>
<feature type="chain" id="PRO_1000134688" description="3-hydroxyacyl-[acyl-carrier-protein] dehydratase FabZ">
    <location>
        <begin position="1"/>
        <end position="144"/>
    </location>
</feature>
<feature type="active site" evidence="1">
    <location>
        <position position="48"/>
    </location>
</feature>
<accession>B9IRQ9</accession>